<keyword id="KW-0238">DNA-binding</keyword>
<keyword id="KW-0479">Metal-binding</keyword>
<keyword id="KW-1185">Reference proteome</keyword>
<keyword id="KW-0677">Repeat</keyword>
<keyword id="KW-0862">Zinc</keyword>
<keyword id="KW-0863">Zinc-finger</keyword>
<proteinExistence type="evidence at transcript level"/>
<organism>
    <name type="scientific">Oryza sativa subsp. japonica</name>
    <name type="common">Rice</name>
    <dbReference type="NCBI Taxonomy" id="39947"/>
    <lineage>
        <taxon>Eukaryota</taxon>
        <taxon>Viridiplantae</taxon>
        <taxon>Streptophyta</taxon>
        <taxon>Embryophyta</taxon>
        <taxon>Tracheophyta</taxon>
        <taxon>Spermatophyta</taxon>
        <taxon>Magnoliopsida</taxon>
        <taxon>Liliopsida</taxon>
        <taxon>Poales</taxon>
        <taxon>Poaceae</taxon>
        <taxon>BOP clade</taxon>
        <taxon>Oryzoideae</taxon>
        <taxon>Oryzeae</taxon>
        <taxon>Oryzinae</taxon>
        <taxon>Oryza</taxon>
        <taxon>Oryza sativa</taxon>
    </lineage>
</organism>
<feature type="chain" id="PRO_0000346832" description="Zinc finger CCCH domain-containing protein 37">
    <location>
        <begin position="1"/>
        <end position="255"/>
    </location>
</feature>
<feature type="zinc finger region" description="C3H1-type 1" evidence="1">
    <location>
        <begin position="98"/>
        <end position="128"/>
    </location>
</feature>
<feature type="zinc finger region" description="C3H1-type 2" evidence="1">
    <location>
        <begin position="137"/>
        <end position="159"/>
    </location>
</feature>
<reference key="1">
    <citation type="journal article" date="2005" name="Mol. Genet. Genomics">
        <title>A fine physical map of the rice chromosome 5.</title>
        <authorList>
            <person name="Cheng C.-H."/>
            <person name="Chung M.C."/>
            <person name="Liu S.-M."/>
            <person name="Chen S.-K."/>
            <person name="Kao F.Y."/>
            <person name="Lin S.-J."/>
            <person name="Hsiao S.-H."/>
            <person name="Tseng I.C."/>
            <person name="Hsing Y.-I.C."/>
            <person name="Wu H.-P."/>
            <person name="Chen C.-S."/>
            <person name="Shaw J.-F."/>
            <person name="Wu J."/>
            <person name="Matsumoto T."/>
            <person name="Sasaki T."/>
            <person name="Chen H.-C."/>
            <person name="Chow T.-Y."/>
        </authorList>
    </citation>
    <scope>NUCLEOTIDE SEQUENCE [LARGE SCALE GENOMIC DNA]</scope>
    <source>
        <strain>cv. Nipponbare</strain>
    </source>
</reference>
<reference key="2">
    <citation type="journal article" date="2005" name="Nature">
        <title>The map-based sequence of the rice genome.</title>
        <authorList>
            <consortium name="International rice genome sequencing project (IRGSP)"/>
        </authorList>
    </citation>
    <scope>NUCLEOTIDE SEQUENCE [LARGE SCALE GENOMIC DNA]</scope>
    <source>
        <strain>cv. Nipponbare</strain>
    </source>
</reference>
<reference key="3">
    <citation type="journal article" date="2008" name="Nucleic Acids Res.">
        <title>The rice annotation project database (RAP-DB): 2008 update.</title>
        <authorList>
            <consortium name="The rice annotation project (RAP)"/>
        </authorList>
    </citation>
    <scope>GENOME REANNOTATION</scope>
    <source>
        <strain>cv. Nipponbare</strain>
    </source>
</reference>
<reference key="4">
    <citation type="journal article" date="2013" name="Rice">
        <title>Improvement of the Oryza sativa Nipponbare reference genome using next generation sequence and optical map data.</title>
        <authorList>
            <person name="Kawahara Y."/>
            <person name="de la Bastide M."/>
            <person name="Hamilton J.P."/>
            <person name="Kanamori H."/>
            <person name="McCombie W.R."/>
            <person name="Ouyang S."/>
            <person name="Schwartz D.C."/>
            <person name="Tanaka T."/>
            <person name="Wu J."/>
            <person name="Zhou S."/>
            <person name="Childs K.L."/>
            <person name="Davidson R.M."/>
            <person name="Lin H."/>
            <person name="Quesada-Ocampo L."/>
            <person name="Vaillancourt B."/>
            <person name="Sakai H."/>
            <person name="Lee S.S."/>
            <person name="Kim J."/>
            <person name="Numa H."/>
            <person name="Itoh T."/>
            <person name="Buell C.R."/>
            <person name="Matsumoto T."/>
        </authorList>
    </citation>
    <scope>GENOME REANNOTATION</scope>
    <source>
        <strain>cv. Nipponbare</strain>
    </source>
</reference>
<reference key="5">
    <citation type="journal article" date="2003" name="Science">
        <title>Collection, mapping, and annotation of over 28,000 cDNA clones from japonica rice.</title>
        <authorList>
            <consortium name="The rice full-length cDNA consortium"/>
        </authorList>
    </citation>
    <scope>NUCLEOTIDE SEQUENCE [LARGE SCALE MRNA]</scope>
    <source>
        <strain>cv. Nipponbare</strain>
    </source>
</reference>
<reference key="6">
    <citation type="journal article" date="2008" name="BMC Genomics">
        <title>Genome-wide analysis of CCCH zinc finger family in Arabidopsis and rice.</title>
        <authorList>
            <person name="Wang D."/>
            <person name="Guo Y."/>
            <person name="Wu C."/>
            <person name="Yang G."/>
            <person name="Li Y."/>
            <person name="Zheng C."/>
        </authorList>
    </citation>
    <scope>NOMENCLATURE</scope>
</reference>
<name>C3H37_ORYSJ</name>
<evidence type="ECO:0000255" key="1">
    <source>
        <dbReference type="PROSITE-ProRule" id="PRU00723"/>
    </source>
</evidence>
<accession>Q65X92</accession>
<dbReference type="EMBL" id="AC109596">
    <property type="protein sequence ID" value="AAU44059.1"/>
    <property type="molecule type" value="Genomic_DNA"/>
</dbReference>
<dbReference type="EMBL" id="AP008211">
    <property type="protein sequence ID" value="BAF18013.1"/>
    <property type="molecule type" value="Genomic_DNA"/>
</dbReference>
<dbReference type="EMBL" id="AP014961">
    <property type="protein sequence ID" value="BAS94987.1"/>
    <property type="molecule type" value="Genomic_DNA"/>
</dbReference>
<dbReference type="EMBL" id="AK108249">
    <property type="status" value="NOT_ANNOTATED_CDS"/>
    <property type="molecule type" value="mRNA"/>
</dbReference>
<dbReference type="RefSeq" id="XP_015637897.1">
    <property type="nucleotide sequence ID" value="XM_015782411.1"/>
</dbReference>
<dbReference type="FunCoup" id="Q65X92">
    <property type="interactions" value="321"/>
</dbReference>
<dbReference type="STRING" id="39947.Q65X92"/>
<dbReference type="PaxDb" id="39947-Q65X92"/>
<dbReference type="EnsemblPlants" id="Os05t0525900-01">
    <property type="protein sequence ID" value="Os05t0525900-01"/>
    <property type="gene ID" value="Os05g0525900"/>
</dbReference>
<dbReference type="Gramene" id="Os05t0525900-01">
    <property type="protein sequence ID" value="Os05t0525900-01"/>
    <property type="gene ID" value="Os05g0525900"/>
</dbReference>
<dbReference type="KEGG" id="dosa:Os05g0525900"/>
<dbReference type="eggNOG" id="KOG1595">
    <property type="taxonomic scope" value="Eukaryota"/>
</dbReference>
<dbReference type="HOGENOM" id="CLU_044407_1_0_1"/>
<dbReference type="InParanoid" id="Q65X92"/>
<dbReference type="OMA" id="SACSWAD"/>
<dbReference type="OrthoDB" id="410307at2759"/>
<dbReference type="Proteomes" id="UP000000763">
    <property type="component" value="Chromosome 5"/>
</dbReference>
<dbReference type="Proteomes" id="UP000059680">
    <property type="component" value="Chromosome 5"/>
</dbReference>
<dbReference type="ExpressionAtlas" id="Q65X92">
    <property type="expression patterns" value="baseline and differential"/>
</dbReference>
<dbReference type="GO" id="GO:0003677">
    <property type="term" value="F:DNA binding"/>
    <property type="evidence" value="ECO:0007669"/>
    <property type="project" value="UniProtKB-KW"/>
</dbReference>
<dbReference type="GO" id="GO:0008270">
    <property type="term" value="F:zinc ion binding"/>
    <property type="evidence" value="ECO:0007669"/>
    <property type="project" value="UniProtKB-KW"/>
</dbReference>
<dbReference type="Gene3D" id="3.30.1370.210">
    <property type="match status" value="1"/>
</dbReference>
<dbReference type="InterPro" id="IPR045234">
    <property type="entry name" value="Unkempt-like"/>
</dbReference>
<dbReference type="InterPro" id="IPR000571">
    <property type="entry name" value="Znf_CCCH"/>
</dbReference>
<dbReference type="PANTHER" id="PTHR14493">
    <property type="entry name" value="UNKEMPT FAMILY MEMBER"/>
    <property type="match status" value="1"/>
</dbReference>
<dbReference type="PANTHER" id="PTHR14493:SF44">
    <property type="entry name" value="ZINC FINGER CCCH DOMAIN-CONTAINING PROTEIN 10"/>
    <property type="match status" value="1"/>
</dbReference>
<dbReference type="Pfam" id="PF00642">
    <property type="entry name" value="zf-CCCH"/>
    <property type="match status" value="1"/>
</dbReference>
<dbReference type="Pfam" id="PF25512">
    <property type="entry name" value="zf-CCCH_AtC3H23"/>
    <property type="match status" value="1"/>
</dbReference>
<dbReference type="SMART" id="SM00356">
    <property type="entry name" value="ZnF_C3H1"/>
    <property type="match status" value="2"/>
</dbReference>
<dbReference type="PROSITE" id="PS50103">
    <property type="entry name" value="ZF_C3H1"/>
    <property type="match status" value="1"/>
</dbReference>
<sequence length="255" mass="28258">MASREHLLLDPAALAVSWADPAAVEIPPELLAALGEYLSARRSDGEAEADAEAEADDEFMMYEFKVRRCARARSHDWTACPYAHPGEAARRRDPRRVAYTGEPCPDFRRRPGAACPRGSTCPFAHGTFELWLHPSRYRTRPCRAGVACRRRVCFFAHTAGELRAGSKEDSPLSLSPKSTLASLWESPPVSPVEGRRWVDGIDECDADAEMEELMFAMRELGLRKVRPSASSVTPVLPPVTDEDGPDFGWVSELVM</sequence>
<protein>
    <recommendedName>
        <fullName>Zinc finger CCCH domain-containing protein 37</fullName>
        <shortName>OsC3H37</shortName>
    </recommendedName>
</protein>
<gene>
    <name type="ordered locus">Os05g0525900</name>
    <name type="ordered locus">LOC_Os05g45020</name>
    <name type="ORF">OJ1593_C11.10</name>
</gene>